<organism>
    <name type="scientific">Candida glabrata (strain ATCC 2001 / BCRC 20586 / JCM 3761 / NBRC 0622 / NRRL Y-65 / CBS 138)</name>
    <name type="common">Yeast</name>
    <name type="synonym">Nakaseomyces glabratus</name>
    <dbReference type="NCBI Taxonomy" id="284593"/>
    <lineage>
        <taxon>Eukaryota</taxon>
        <taxon>Fungi</taxon>
        <taxon>Dikarya</taxon>
        <taxon>Ascomycota</taxon>
        <taxon>Saccharomycotina</taxon>
        <taxon>Saccharomycetes</taxon>
        <taxon>Saccharomycetales</taxon>
        <taxon>Saccharomycetaceae</taxon>
        <taxon>Nakaseomyces</taxon>
    </lineage>
</organism>
<proteinExistence type="inferred from homology"/>
<sequence length="398" mass="44834">MSDMLPLAMYALNVEPYTHTPAVLLDTPVTVRITMAAIDPEPFDEDKKPSTLRIIRRNPVYLDAGEVDEEKLIEELEGDEAAEDGDEASDDDKEEEDEDEDVDEDDEDDDEDDDGEDEYEECVVVTLSPETRCQQAIDITIAPEEDVQFLVTGSYTISLTGNYVKHPFDEPLEDLYSDEDSEEYSDDELDQEIEEDDELDHDEASSEESDEDQEFYDAISEGDEDIDEQLAKLEETSDVEAHLEDLIAKDNKKKRKQEQLDEQPETKKSKKTKDEKNTKATENEKKNKAQVLEGGVIIEDRKIGEGPKAKKGSKVGMRYIGKLKNGKVFDKNTSGKPFYFKLHRGEVIKGWDIGVTGMAIGGERRIVIPAPYAYGKQTLPGIPANSELTFDVKLVSLK</sequence>
<accession>Q6FK71</accession>
<comment type="function">
    <text evidence="2">PPIase that acts as a histone chaperone. Histone proline isomerase that increases the rate of cis-trans isomerization at prolines on the histone H3 N-terminal tail. Proline isomerization influences H3 methylation thereby regulating gene expression.</text>
</comment>
<comment type="catalytic activity">
    <reaction evidence="2">
        <text>[protein]-peptidylproline (omega=180) = [protein]-peptidylproline (omega=0)</text>
        <dbReference type="Rhea" id="RHEA:16237"/>
        <dbReference type="Rhea" id="RHEA-COMP:10747"/>
        <dbReference type="Rhea" id="RHEA-COMP:10748"/>
        <dbReference type="ChEBI" id="CHEBI:83833"/>
        <dbReference type="ChEBI" id="CHEBI:83834"/>
        <dbReference type="EC" id="5.2.1.8"/>
    </reaction>
</comment>
<comment type="activity regulation">
    <text evidence="1">Inhibited by both FK506 and rapamycin.</text>
</comment>
<comment type="subunit">
    <text evidence="2">Binds to histones H3 and H4.</text>
</comment>
<comment type="subcellular location">
    <subcellularLocation>
        <location evidence="2">Nucleus</location>
    </subcellularLocation>
</comment>
<comment type="similarity">
    <text evidence="5">Belongs to the FKBP-type PPIase family. FKBP3/4 subfamily.</text>
</comment>
<gene>
    <name type="primary">FPR4</name>
    <name type="ordered locus">CAGL0M00638g</name>
</gene>
<name>FKBP4_CANGA</name>
<protein>
    <recommendedName>
        <fullName>FK506-binding protein 4</fullName>
        <ecNumber evidence="2">5.2.1.8</ecNumber>
    </recommendedName>
    <alternativeName>
        <fullName evidence="2">Histone proline isomerase</fullName>
    </alternativeName>
    <alternativeName>
        <fullName>Peptidyl-prolyl cis-trans isomerase</fullName>
        <shortName>PPIase</shortName>
    </alternativeName>
    <alternativeName>
        <fullName>Rotamase</fullName>
    </alternativeName>
</protein>
<evidence type="ECO:0000250" key="1"/>
<evidence type="ECO:0000250" key="2">
    <source>
        <dbReference type="UniProtKB" id="Q06205"/>
    </source>
</evidence>
<evidence type="ECO:0000255" key="3">
    <source>
        <dbReference type="PROSITE-ProRule" id="PRU00277"/>
    </source>
</evidence>
<evidence type="ECO:0000256" key="4">
    <source>
        <dbReference type="SAM" id="MobiDB-lite"/>
    </source>
</evidence>
<evidence type="ECO:0000305" key="5"/>
<feature type="chain" id="PRO_0000233078" description="FK506-binding protein 4">
    <location>
        <begin position="1"/>
        <end position="398"/>
    </location>
</feature>
<feature type="domain" description="PPIase FKBP-type" evidence="3">
    <location>
        <begin position="312"/>
        <end position="398"/>
    </location>
</feature>
<feature type="region of interest" description="Disordered" evidence="4">
    <location>
        <begin position="66"/>
        <end position="120"/>
    </location>
</feature>
<feature type="region of interest" description="Disordered" evidence="4">
    <location>
        <begin position="164"/>
        <end position="232"/>
    </location>
</feature>
<feature type="region of interest" description="Disordered" evidence="4">
    <location>
        <begin position="245"/>
        <end position="288"/>
    </location>
</feature>
<feature type="compositionally biased region" description="Acidic residues" evidence="4">
    <location>
        <begin position="170"/>
        <end position="228"/>
    </location>
</feature>
<feature type="compositionally biased region" description="Basic and acidic residues" evidence="4">
    <location>
        <begin position="264"/>
        <end position="287"/>
    </location>
</feature>
<reference key="1">
    <citation type="journal article" date="2004" name="Nature">
        <title>Genome evolution in yeasts.</title>
        <authorList>
            <person name="Dujon B."/>
            <person name="Sherman D."/>
            <person name="Fischer G."/>
            <person name="Durrens P."/>
            <person name="Casaregola S."/>
            <person name="Lafontaine I."/>
            <person name="de Montigny J."/>
            <person name="Marck C."/>
            <person name="Neuveglise C."/>
            <person name="Talla E."/>
            <person name="Goffard N."/>
            <person name="Frangeul L."/>
            <person name="Aigle M."/>
            <person name="Anthouard V."/>
            <person name="Babour A."/>
            <person name="Barbe V."/>
            <person name="Barnay S."/>
            <person name="Blanchin S."/>
            <person name="Beckerich J.-M."/>
            <person name="Beyne E."/>
            <person name="Bleykasten C."/>
            <person name="Boisrame A."/>
            <person name="Boyer J."/>
            <person name="Cattolico L."/>
            <person name="Confanioleri F."/>
            <person name="de Daruvar A."/>
            <person name="Despons L."/>
            <person name="Fabre E."/>
            <person name="Fairhead C."/>
            <person name="Ferry-Dumazet H."/>
            <person name="Groppi A."/>
            <person name="Hantraye F."/>
            <person name="Hennequin C."/>
            <person name="Jauniaux N."/>
            <person name="Joyet P."/>
            <person name="Kachouri R."/>
            <person name="Kerrest A."/>
            <person name="Koszul R."/>
            <person name="Lemaire M."/>
            <person name="Lesur I."/>
            <person name="Ma L."/>
            <person name="Muller H."/>
            <person name="Nicaud J.-M."/>
            <person name="Nikolski M."/>
            <person name="Oztas S."/>
            <person name="Ozier-Kalogeropoulos O."/>
            <person name="Pellenz S."/>
            <person name="Potier S."/>
            <person name="Richard G.-F."/>
            <person name="Straub M.-L."/>
            <person name="Suleau A."/>
            <person name="Swennen D."/>
            <person name="Tekaia F."/>
            <person name="Wesolowski-Louvel M."/>
            <person name="Westhof E."/>
            <person name="Wirth B."/>
            <person name="Zeniou-Meyer M."/>
            <person name="Zivanovic Y."/>
            <person name="Bolotin-Fukuhara M."/>
            <person name="Thierry A."/>
            <person name="Bouchier C."/>
            <person name="Caudron B."/>
            <person name="Scarpelli C."/>
            <person name="Gaillardin C."/>
            <person name="Weissenbach J."/>
            <person name="Wincker P."/>
            <person name="Souciet J.-L."/>
        </authorList>
    </citation>
    <scope>NUCLEOTIDE SEQUENCE [LARGE SCALE GENOMIC DNA]</scope>
    <source>
        <strain>ATCC 2001 / BCRC 20586 / JCM 3761 / NBRC 0622 / NRRL Y-65 / CBS 138</strain>
    </source>
</reference>
<keyword id="KW-0143">Chaperone</keyword>
<keyword id="KW-0413">Isomerase</keyword>
<keyword id="KW-0539">Nucleus</keyword>
<keyword id="KW-1185">Reference proteome</keyword>
<keyword id="KW-0697">Rotamase</keyword>
<dbReference type="EC" id="5.2.1.8" evidence="2"/>
<dbReference type="EMBL" id="CR380959">
    <property type="protein sequence ID" value="CAG62349.1"/>
    <property type="molecule type" value="Genomic_DNA"/>
</dbReference>
<dbReference type="RefSeq" id="XP_449373.1">
    <property type="nucleotide sequence ID" value="XM_449373.1"/>
</dbReference>
<dbReference type="SMR" id="Q6FK71"/>
<dbReference type="FunCoup" id="Q6FK71">
    <property type="interactions" value="608"/>
</dbReference>
<dbReference type="STRING" id="284593.Q6FK71"/>
<dbReference type="EnsemblFungi" id="CAGL0M00638g-T">
    <property type="protein sequence ID" value="CAGL0M00638g-T-p1"/>
    <property type="gene ID" value="CAGL0M00638g"/>
</dbReference>
<dbReference type="KEGG" id="cgr:2891596"/>
<dbReference type="CGD" id="CAL0136625">
    <property type="gene designation" value="FPR4"/>
</dbReference>
<dbReference type="VEuPathDB" id="FungiDB:CAGL0M00638g"/>
<dbReference type="eggNOG" id="KOG0552">
    <property type="taxonomic scope" value="Eukaryota"/>
</dbReference>
<dbReference type="HOGENOM" id="CLU_022297_3_1_1"/>
<dbReference type="InParanoid" id="Q6FK71"/>
<dbReference type="OMA" id="SWNEICW"/>
<dbReference type="Proteomes" id="UP000002428">
    <property type="component" value="Chromosome M"/>
</dbReference>
<dbReference type="GO" id="GO:0000785">
    <property type="term" value="C:chromatin"/>
    <property type="evidence" value="ECO:0007669"/>
    <property type="project" value="TreeGrafter"/>
</dbReference>
<dbReference type="GO" id="GO:0005730">
    <property type="term" value="C:nucleolus"/>
    <property type="evidence" value="ECO:0007669"/>
    <property type="project" value="TreeGrafter"/>
</dbReference>
<dbReference type="GO" id="GO:0003755">
    <property type="term" value="F:peptidyl-prolyl cis-trans isomerase activity"/>
    <property type="evidence" value="ECO:0007669"/>
    <property type="project" value="UniProtKB-KW"/>
</dbReference>
<dbReference type="Gene3D" id="3.10.50.40">
    <property type="match status" value="1"/>
</dbReference>
<dbReference type="Gene3D" id="2.60.120.340">
    <property type="entry name" value="Nucleoplasmin core domain"/>
    <property type="match status" value="1"/>
</dbReference>
<dbReference type="InterPro" id="IPR041232">
    <property type="entry name" value="NPL"/>
</dbReference>
<dbReference type="InterPro" id="IPR046357">
    <property type="entry name" value="PPIase_dom_sf"/>
</dbReference>
<dbReference type="InterPro" id="IPR001179">
    <property type="entry name" value="PPIase_FKBP_dom"/>
</dbReference>
<dbReference type="InterPro" id="IPR023566">
    <property type="entry name" value="PPIase_Fpr3/Fpr4-like"/>
</dbReference>
<dbReference type="PANTHER" id="PTHR43811:SF19">
    <property type="entry name" value="39 KDA FK506-BINDING NUCLEAR PROTEIN"/>
    <property type="match status" value="1"/>
</dbReference>
<dbReference type="PANTHER" id="PTHR43811">
    <property type="entry name" value="FKBP-TYPE PEPTIDYL-PROLYL CIS-TRANS ISOMERASE FKPA"/>
    <property type="match status" value="1"/>
</dbReference>
<dbReference type="Pfam" id="PF00254">
    <property type="entry name" value="FKBP_C"/>
    <property type="match status" value="1"/>
</dbReference>
<dbReference type="Pfam" id="PF17800">
    <property type="entry name" value="NPL"/>
    <property type="match status" value="1"/>
</dbReference>
<dbReference type="PIRSF" id="PIRSF001473">
    <property type="entry name" value="FK506-bp_FPR3"/>
    <property type="match status" value="1"/>
</dbReference>
<dbReference type="SUPFAM" id="SSF54534">
    <property type="entry name" value="FKBP-like"/>
    <property type="match status" value="1"/>
</dbReference>
<dbReference type="PROSITE" id="PS50059">
    <property type="entry name" value="FKBP_PPIASE"/>
    <property type="match status" value="1"/>
</dbReference>